<keyword id="KW-0963">Cytoplasm</keyword>
<keyword id="KW-0414">Isoprene biosynthesis</keyword>
<keyword id="KW-0444">Lipid biosynthesis</keyword>
<keyword id="KW-0443">Lipid metabolism</keyword>
<keyword id="KW-0460">Magnesium</keyword>
<keyword id="KW-0479">Metal-binding</keyword>
<keyword id="KW-1185">Reference proteome</keyword>
<keyword id="KW-0808">Transferase</keyword>
<evidence type="ECO:0000250" key="1"/>
<evidence type="ECO:0000250" key="2">
    <source>
        <dbReference type="UniProtKB" id="P14324"/>
    </source>
</evidence>
<evidence type="ECO:0000305" key="3"/>
<reference key="1">
    <citation type="journal article" date="1994" name="Biochim. Biophys. Acta">
        <title>Isolation and characterisation of the linked genes, FPS1 and QCR8, coding for farnesyl-diphosphate synthase and the 11 kDa subunit VIII of the mitochondrial bc1-complex in the yeast Kluyveromyces lactis.</title>
        <authorList>
            <person name="Mulder W."/>
            <person name="Scholten I.H.J.M."/>
            <person name="Nagelkerken B."/>
            <person name="Grivell L.A."/>
        </authorList>
    </citation>
    <scope>NUCLEOTIDE SEQUENCE [GENOMIC DNA]</scope>
    <source>
        <strain>ATCC 8585 / CBS 2359 / DSM 70799 / NBRC 1267 / NRRL Y-1140 / WM37</strain>
    </source>
</reference>
<reference key="2">
    <citation type="journal article" date="2004" name="Nature">
        <title>Genome evolution in yeasts.</title>
        <authorList>
            <person name="Dujon B."/>
            <person name="Sherman D."/>
            <person name="Fischer G."/>
            <person name="Durrens P."/>
            <person name="Casaregola S."/>
            <person name="Lafontaine I."/>
            <person name="de Montigny J."/>
            <person name="Marck C."/>
            <person name="Neuveglise C."/>
            <person name="Talla E."/>
            <person name="Goffard N."/>
            <person name="Frangeul L."/>
            <person name="Aigle M."/>
            <person name="Anthouard V."/>
            <person name="Babour A."/>
            <person name="Barbe V."/>
            <person name="Barnay S."/>
            <person name="Blanchin S."/>
            <person name="Beckerich J.-M."/>
            <person name="Beyne E."/>
            <person name="Bleykasten C."/>
            <person name="Boisrame A."/>
            <person name="Boyer J."/>
            <person name="Cattolico L."/>
            <person name="Confanioleri F."/>
            <person name="de Daruvar A."/>
            <person name="Despons L."/>
            <person name="Fabre E."/>
            <person name="Fairhead C."/>
            <person name="Ferry-Dumazet H."/>
            <person name="Groppi A."/>
            <person name="Hantraye F."/>
            <person name="Hennequin C."/>
            <person name="Jauniaux N."/>
            <person name="Joyet P."/>
            <person name="Kachouri R."/>
            <person name="Kerrest A."/>
            <person name="Koszul R."/>
            <person name="Lemaire M."/>
            <person name="Lesur I."/>
            <person name="Ma L."/>
            <person name="Muller H."/>
            <person name="Nicaud J.-M."/>
            <person name="Nikolski M."/>
            <person name="Oztas S."/>
            <person name="Ozier-Kalogeropoulos O."/>
            <person name="Pellenz S."/>
            <person name="Potier S."/>
            <person name="Richard G.-F."/>
            <person name="Straub M.-L."/>
            <person name="Suleau A."/>
            <person name="Swennen D."/>
            <person name="Tekaia F."/>
            <person name="Wesolowski-Louvel M."/>
            <person name="Westhof E."/>
            <person name="Wirth B."/>
            <person name="Zeniou-Meyer M."/>
            <person name="Zivanovic Y."/>
            <person name="Bolotin-Fukuhara M."/>
            <person name="Thierry A."/>
            <person name="Bouchier C."/>
            <person name="Caudron B."/>
            <person name="Scarpelli C."/>
            <person name="Gaillardin C."/>
            <person name="Weissenbach J."/>
            <person name="Wincker P."/>
            <person name="Souciet J.-L."/>
        </authorList>
    </citation>
    <scope>NUCLEOTIDE SEQUENCE [LARGE SCALE GENOMIC DNA]</scope>
    <source>
        <strain>ATCC 8585 / CBS 2359 / DSM 70799 / NBRC 1267 / NRRL Y-1140 / WM37</strain>
    </source>
</reference>
<protein>
    <recommendedName>
        <fullName>Farnesyl pyrophosphate synthase</fullName>
        <shortName>FPP synthase</shortName>
        <shortName>FPS</shortName>
        <ecNumber>2.5.1.10</ecNumber>
    </recommendedName>
    <alternativeName>
        <fullName>(2E,6E)-farnesyl diphosphate synthase</fullName>
    </alternativeName>
    <alternativeName>
        <fullName>Dimethylallyltranstransferase</fullName>
        <ecNumber>2.5.1.1</ecNumber>
    </alternativeName>
    <alternativeName>
        <fullName>Farnesyl diphosphate synthase</fullName>
    </alternativeName>
    <alternativeName>
        <fullName>Geranyltranstransferase</fullName>
    </alternativeName>
</protein>
<dbReference type="EC" id="2.5.1.10"/>
<dbReference type="EC" id="2.5.1.1"/>
<dbReference type="EMBL" id="X76026">
    <property type="protein sequence ID" value="CAA53614.1"/>
    <property type="molecule type" value="Genomic_DNA"/>
</dbReference>
<dbReference type="EMBL" id="CR382121">
    <property type="protein sequence ID" value="CAH02888.1"/>
    <property type="molecule type" value="Genomic_DNA"/>
</dbReference>
<dbReference type="PIR" id="S50214">
    <property type="entry name" value="S50214"/>
</dbReference>
<dbReference type="RefSeq" id="XP_451300.1">
    <property type="nucleotide sequence ID" value="XM_451300.1"/>
</dbReference>
<dbReference type="SMR" id="P49349"/>
<dbReference type="FunCoup" id="P49349">
    <property type="interactions" value="866"/>
</dbReference>
<dbReference type="STRING" id="284590.P49349"/>
<dbReference type="PaxDb" id="284590-P49349"/>
<dbReference type="KEGG" id="kla:KLLA0_A06732g"/>
<dbReference type="eggNOG" id="KOG0711">
    <property type="taxonomic scope" value="Eukaryota"/>
</dbReference>
<dbReference type="HOGENOM" id="CLU_028376_1_0_1"/>
<dbReference type="InParanoid" id="P49349"/>
<dbReference type="OMA" id="CSWVVNQ"/>
<dbReference type="UniPathway" id="UPA00259">
    <property type="reaction ID" value="UER00368"/>
</dbReference>
<dbReference type="UniPathway" id="UPA00260">
    <property type="reaction ID" value="UER00369"/>
</dbReference>
<dbReference type="Proteomes" id="UP000000598">
    <property type="component" value="Chromosome A"/>
</dbReference>
<dbReference type="GO" id="GO:0005737">
    <property type="term" value="C:cytoplasm"/>
    <property type="evidence" value="ECO:0007669"/>
    <property type="project" value="UniProtKB-SubCell"/>
</dbReference>
<dbReference type="GO" id="GO:0004337">
    <property type="term" value="F:(2E,6E)-farnesyl diphosphate synthase activity"/>
    <property type="evidence" value="ECO:0007669"/>
    <property type="project" value="UniProtKB-EC"/>
</dbReference>
<dbReference type="GO" id="GO:0004161">
    <property type="term" value="F:dimethylallyltranstransferase activity"/>
    <property type="evidence" value="ECO:0007669"/>
    <property type="project" value="UniProtKB-EC"/>
</dbReference>
<dbReference type="GO" id="GO:0046872">
    <property type="term" value="F:metal ion binding"/>
    <property type="evidence" value="ECO:0007669"/>
    <property type="project" value="UniProtKB-KW"/>
</dbReference>
<dbReference type="GO" id="GO:0045337">
    <property type="term" value="P:farnesyl diphosphate biosynthetic process"/>
    <property type="evidence" value="ECO:0007669"/>
    <property type="project" value="UniProtKB-UniPathway"/>
</dbReference>
<dbReference type="GO" id="GO:0033384">
    <property type="term" value="P:geranyl diphosphate biosynthetic process"/>
    <property type="evidence" value="ECO:0007669"/>
    <property type="project" value="UniProtKB-UniPathway"/>
</dbReference>
<dbReference type="CDD" id="cd00685">
    <property type="entry name" value="Trans_IPPS_HT"/>
    <property type="match status" value="1"/>
</dbReference>
<dbReference type="FunFam" id="1.10.600.10:FF:000006">
    <property type="entry name" value="Farnesyl pyrophosphate synthase"/>
    <property type="match status" value="1"/>
</dbReference>
<dbReference type="Gene3D" id="1.10.600.10">
    <property type="entry name" value="Farnesyl Diphosphate Synthase"/>
    <property type="match status" value="1"/>
</dbReference>
<dbReference type="InterPro" id="IPR039702">
    <property type="entry name" value="FPS1-like"/>
</dbReference>
<dbReference type="InterPro" id="IPR008949">
    <property type="entry name" value="Isoprenoid_synthase_dom_sf"/>
</dbReference>
<dbReference type="InterPro" id="IPR000092">
    <property type="entry name" value="Polyprenyl_synt"/>
</dbReference>
<dbReference type="InterPro" id="IPR033749">
    <property type="entry name" value="Polyprenyl_synt_CS"/>
</dbReference>
<dbReference type="PANTHER" id="PTHR11525:SF0">
    <property type="entry name" value="FARNESYL PYROPHOSPHATE SYNTHASE"/>
    <property type="match status" value="1"/>
</dbReference>
<dbReference type="PANTHER" id="PTHR11525">
    <property type="entry name" value="FARNESYL-PYROPHOSPHATE SYNTHETASE"/>
    <property type="match status" value="1"/>
</dbReference>
<dbReference type="Pfam" id="PF00348">
    <property type="entry name" value="polyprenyl_synt"/>
    <property type="match status" value="1"/>
</dbReference>
<dbReference type="SFLD" id="SFLDS00005">
    <property type="entry name" value="Isoprenoid_Synthase_Type_I"/>
    <property type="match status" value="1"/>
</dbReference>
<dbReference type="SFLD" id="SFLDG01017">
    <property type="entry name" value="Polyprenyl_Transferase_Like"/>
    <property type="match status" value="1"/>
</dbReference>
<dbReference type="SUPFAM" id="SSF48576">
    <property type="entry name" value="Terpenoid synthases"/>
    <property type="match status" value="1"/>
</dbReference>
<dbReference type="PROSITE" id="PS00723">
    <property type="entry name" value="POLYPRENYL_SYNTHASE_1"/>
    <property type="match status" value="1"/>
</dbReference>
<dbReference type="PROSITE" id="PS00444">
    <property type="entry name" value="POLYPRENYL_SYNTHASE_2"/>
    <property type="match status" value="1"/>
</dbReference>
<gene>
    <name type="primary">FPS1</name>
    <name type="synonym">FPS</name>
    <name type="ordered locus">KLLA0A06732g</name>
</gene>
<accession>P49349</accession>
<organism>
    <name type="scientific">Kluyveromyces lactis (strain ATCC 8585 / CBS 2359 / DSM 70799 / NBRC 1267 / NRRL Y-1140 / WM37)</name>
    <name type="common">Yeast</name>
    <name type="synonym">Candida sphaerica</name>
    <dbReference type="NCBI Taxonomy" id="284590"/>
    <lineage>
        <taxon>Eukaryota</taxon>
        <taxon>Fungi</taxon>
        <taxon>Dikarya</taxon>
        <taxon>Ascomycota</taxon>
        <taxon>Saccharomycotina</taxon>
        <taxon>Saccharomycetes</taxon>
        <taxon>Saccharomycetales</taxon>
        <taxon>Saccharomycetaceae</taxon>
        <taxon>Kluyveromyces</taxon>
    </lineage>
</organism>
<proteinExistence type="inferred from homology"/>
<sequence>MSDNRAQFLEVFPSLVQELRDILAGYGMPEEAIEWYEKSLNYNTPGGKLNRGLSVVDTYALLKGYKSVSELSAEEYKKVAILGWCIELLQAYFLVADDMMDQSITRRGQPCWYKVENVGDIAINDAFMLEGAIYCLLKKHFRTEPYYVDLLELFHDVTFQTELGQLLDLITAPEDKVDLSKFSLEKHSFIVIFKTAYYSFYLAVALAMFAAGITDSKDLKQASDVLIPLGEYFQIQDDFLDCFGKPEDIGKIGTDIQDNKCSWVINVALKNATKEQRDILDENYGRKDSEKEQKCRAVFNELNIQDIYHKYEEETASNLREKIANIDESRGFKAEVLTLFLNKIYHRKK</sequence>
<feature type="chain" id="PRO_0000123949" description="Farnesyl pyrophosphate synthase">
    <location>
        <begin position="1"/>
        <end position="349"/>
    </location>
</feature>
<feature type="binding site" evidence="2">
    <location>
        <position position="48"/>
    </location>
    <ligand>
        <name>isopentenyl diphosphate</name>
        <dbReference type="ChEBI" id="CHEBI:128769"/>
    </ligand>
</feature>
<feature type="binding site" evidence="2">
    <location>
        <position position="51"/>
    </location>
    <ligand>
        <name>isopentenyl diphosphate</name>
        <dbReference type="ChEBI" id="CHEBI:128769"/>
    </ligand>
</feature>
<feature type="binding site" evidence="2">
    <location>
        <position position="90"/>
    </location>
    <ligand>
        <name>isopentenyl diphosphate</name>
        <dbReference type="ChEBI" id="CHEBI:128769"/>
    </ligand>
</feature>
<feature type="binding site" evidence="2">
    <location>
        <position position="97"/>
    </location>
    <ligand>
        <name>Mg(2+)</name>
        <dbReference type="ChEBI" id="CHEBI:18420"/>
        <label>1</label>
    </ligand>
</feature>
<feature type="binding site" evidence="2">
    <location>
        <position position="97"/>
    </location>
    <ligand>
        <name>Mg(2+)</name>
        <dbReference type="ChEBI" id="CHEBI:18420"/>
        <label>2</label>
    </ligand>
</feature>
<feature type="binding site" evidence="2">
    <location>
        <position position="101"/>
    </location>
    <ligand>
        <name>Mg(2+)</name>
        <dbReference type="ChEBI" id="CHEBI:18420"/>
        <label>1</label>
    </ligand>
</feature>
<feature type="binding site" evidence="2">
    <location>
        <position position="101"/>
    </location>
    <ligand>
        <name>Mg(2+)</name>
        <dbReference type="ChEBI" id="CHEBI:18420"/>
        <label>2</label>
    </ligand>
</feature>
<feature type="binding site" evidence="1">
    <location>
        <position position="106"/>
    </location>
    <ligand>
        <name>dimethylallyl diphosphate</name>
        <dbReference type="ChEBI" id="CHEBI:57623"/>
    </ligand>
</feature>
<feature type="binding site" evidence="2">
    <location>
        <position position="107"/>
    </location>
    <ligand>
        <name>isopentenyl diphosphate</name>
        <dbReference type="ChEBI" id="CHEBI:128769"/>
    </ligand>
</feature>
<feature type="binding site" evidence="1">
    <location>
        <position position="194"/>
    </location>
    <ligand>
        <name>dimethylallyl diphosphate</name>
        <dbReference type="ChEBI" id="CHEBI:57623"/>
    </ligand>
</feature>
<feature type="binding site" evidence="1">
    <location>
        <position position="195"/>
    </location>
    <ligand>
        <name>dimethylallyl diphosphate</name>
        <dbReference type="ChEBI" id="CHEBI:57623"/>
    </ligand>
</feature>
<feature type="binding site" evidence="1">
    <location>
        <position position="234"/>
    </location>
    <ligand>
        <name>dimethylallyl diphosphate</name>
        <dbReference type="ChEBI" id="CHEBI:57623"/>
    </ligand>
</feature>
<feature type="binding site" evidence="1">
    <location>
        <position position="251"/>
    </location>
    <ligand>
        <name>dimethylallyl diphosphate</name>
        <dbReference type="ChEBI" id="CHEBI:57623"/>
    </ligand>
</feature>
<feature type="binding site" evidence="1">
    <location>
        <position position="260"/>
    </location>
    <ligand>
        <name>dimethylallyl diphosphate</name>
        <dbReference type="ChEBI" id="CHEBI:57623"/>
    </ligand>
</feature>
<comment type="function">
    <text>Catalyzes the sequential condensation of isopentenyl pyrophosphate with the allylic pyrophosphates, dimethylallyl pyrophosphate, and then with the resultant geranylpyrophosphate to the ultimate product farnesyl pyrophosphate.</text>
</comment>
<comment type="catalytic activity">
    <reaction>
        <text>isopentenyl diphosphate + dimethylallyl diphosphate = (2E)-geranyl diphosphate + diphosphate</text>
        <dbReference type="Rhea" id="RHEA:22408"/>
        <dbReference type="ChEBI" id="CHEBI:33019"/>
        <dbReference type="ChEBI" id="CHEBI:57623"/>
        <dbReference type="ChEBI" id="CHEBI:58057"/>
        <dbReference type="ChEBI" id="CHEBI:128769"/>
        <dbReference type="EC" id="2.5.1.1"/>
    </reaction>
</comment>
<comment type="catalytic activity">
    <reaction>
        <text>isopentenyl diphosphate + (2E)-geranyl diphosphate = (2E,6E)-farnesyl diphosphate + diphosphate</text>
        <dbReference type="Rhea" id="RHEA:19361"/>
        <dbReference type="ChEBI" id="CHEBI:33019"/>
        <dbReference type="ChEBI" id="CHEBI:58057"/>
        <dbReference type="ChEBI" id="CHEBI:128769"/>
        <dbReference type="ChEBI" id="CHEBI:175763"/>
        <dbReference type="EC" id="2.5.1.10"/>
    </reaction>
</comment>
<comment type="cofactor">
    <cofactor evidence="1">
        <name>Mg(2+)</name>
        <dbReference type="ChEBI" id="CHEBI:18420"/>
    </cofactor>
    <text evidence="1">Binds 2 Mg(2+) ions per subunit.</text>
</comment>
<comment type="pathway">
    <text>Isoprenoid biosynthesis; farnesyl diphosphate biosynthesis; farnesyl diphosphate from geranyl diphosphate and isopentenyl diphosphate: step 1/1.</text>
</comment>
<comment type="pathway">
    <text>Isoprenoid biosynthesis; geranyl diphosphate biosynthesis; geranyl diphosphate from dimethylallyl diphosphate and isopentenyl diphosphate: step 1/1.</text>
</comment>
<comment type="subcellular location">
    <subcellularLocation>
        <location>Cytoplasm</location>
    </subcellularLocation>
</comment>
<comment type="similarity">
    <text evidence="3">Belongs to the FPP/GGPP synthase family.</text>
</comment>
<name>FPPS_KLULA</name>